<accession>Q0I063</accession>
<proteinExistence type="inferred from homology"/>
<sequence>MSTNNSVLVLKVGGALLQCEMGMARLMDTAAAMIANGQQVLMVHGGGCLVDEQLAANGMETVKLEGLRVTPPEQMPIIAGALAGTSNKILQGAATKAGIVSVGMSLADGNTVSAKIKDERLGLVGEVSPKDATYLKFILSQGWMPICSSIAMMDDGQMLNVNADQAATVLAKLVGGKLVLLSDVSGVLDGKGQLIPSLTGQQIAELVKQGVIEKGMKVKVEAALEVAQWMGQAVQVASWRDASQLVALAKGEAVGTQIQP</sequence>
<gene>
    <name evidence="1" type="primary">argB</name>
    <name type="ordered locus">Shewmr7_0237</name>
</gene>
<name>ARGB_SHESR</name>
<organism>
    <name type="scientific">Shewanella sp. (strain MR-7)</name>
    <dbReference type="NCBI Taxonomy" id="60481"/>
    <lineage>
        <taxon>Bacteria</taxon>
        <taxon>Pseudomonadati</taxon>
        <taxon>Pseudomonadota</taxon>
        <taxon>Gammaproteobacteria</taxon>
        <taxon>Alteromonadales</taxon>
        <taxon>Shewanellaceae</taxon>
        <taxon>Shewanella</taxon>
    </lineage>
</organism>
<reference key="1">
    <citation type="submission" date="2006-08" db="EMBL/GenBank/DDBJ databases">
        <title>Complete sequence of chromosome 1 of Shewanella sp. MR-7.</title>
        <authorList>
            <person name="Copeland A."/>
            <person name="Lucas S."/>
            <person name="Lapidus A."/>
            <person name="Barry K."/>
            <person name="Detter J.C."/>
            <person name="Glavina del Rio T."/>
            <person name="Hammon N."/>
            <person name="Israni S."/>
            <person name="Dalin E."/>
            <person name="Tice H."/>
            <person name="Pitluck S."/>
            <person name="Kiss H."/>
            <person name="Brettin T."/>
            <person name="Bruce D."/>
            <person name="Han C."/>
            <person name="Tapia R."/>
            <person name="Gilna P."/>
            <person name="Schmutz J."/>
            <person name="Larimer F."/>
            <person name="Land M."/>
            <person name="Hauser L."/>
            <person name="Kyrpides N."/>
            <person name="Mikhailova N."/>
            <person name="Nealson K."/>
            <person name="Konstantinidis K."/>
            <person name="Klappenbach J."/>
            <person name="Tiedje J."/>
            <person name="Richardson P."/>
        </authorList>
    </citation>
    <scope>NUCLEOTIDE SEQUENCE [LARGE SCALE GENOMIC DNA]</scope>
    <source>
        <strain>MR-7</strain>
    </source>
</reference>
<feature type="chain" id="PRO_0000264757" description="Acetylglutamate kinase">
    <location>
        <begin position="1"/>
        <end position="260"/>
    </location>
</feature>
<feature type="binding site" evidence="1">
    <location>
        <begin position="46"/>
        <end position="47"/>
    </location>
    <ligand>
        <name>substrate</name>
    </ligand>
</feature>
<feature type="binding site" evidence="1">
    <location>
        <position position="68"/>
    </location>
    <ligand>
        <name>substrate</name>
    </ligand>
</feature>
<feature type="binding site" evidence="1">
    <location>
        <position position="160"/>
    </location>
    <ligand>
        <name>substrate</name>
    </ligand>
</feature>
<feature type="site" description="Transition state stabilizer" evidence="1">
    <location>
        <position position="11"/>
    </location>
</feature>
<feature type="site" description="Transition state stabilizer" evidence="1">
    <location>
        <position position="219"/>
    </location>
</feature>
<dbReference type="EC" id="2.7.2.8" evidence="1"/>
<dbReference type="EMBL" id="CP000444">
    <property type="protein sequence ID" value="ABI41242.1"/>
    <property type="molecule type" value="Genomic_DNA"/>
</dbReference>
<dbReference type="RefSeq" id="WP_011624812.1">
    <property type="nucleotide sequence ID" value="NZ_CP080412.1"/>
</dbReference>
<dbReference type="SMR" id="Q0I063"/>
<dbReference type="GeneID" id="94729812"/>
<dbReference type="KEGG" id="shm:Shewmr7_0237"/>
<dbReference type="HOGENOM" id="CLU_053680_1_1_6"/>
<dbReference type="UniPathway" id="UPA00068">
    <property type="reaction ID" value="UER00107"/>
</dbReference>
<dbReference type="GO" id="GO:0005737">
    <property type="term" value="C:cytoplasm"/>
    <property type="evidence" value="ECO:0007669"/>
    <property type="project" value="UniProtKB-SubCell"/>
</dbReference>
<dbReference type="GO" id="GO:0003991">
    <property type="term" value="F:acetylglutamate kinase activity"/>
    <property type="evidence" value="ECO:0007669"/>
    <property type="project" value="UniProtKB-UniRule"/>
</dbReference>
<dbReference type="GO" id="GO:0005524">
    <property type="term" value="F:ATP binding"/>
    <property type="evidence" value="ECO:0007669"/>
    <property type="project" value="UniProtKB-UniRule"/>
</dbReference>
<dbReference type="GO" id="GO:0042450">
    <property type="term" value="P:arginine biosynthetic process via ornithine"/>
    <property type="evidence" value="ECO:0007669"/>
    <property type="project" value="UniProtKB-UniRule"/>
</dbReference>
<dbReference type="GO" id="GO:0006526">
    <property type="term" value="P:L-arginine biosynthetic process"/>
    <property type="evidence" value="ECO:0007669"/>
    <property type="project" value="UniProtKB-UniPathway"/>
</dbReference>
<dbReference type="FunFam" id="3.40.1160.10:FF:000008">
    <property type="entry name" value="Acetylglutamate kinase"/>
    <property type="match status" value="1"/>
</dbReference>
<dbReference type="Gene3D" id="3.40.1160.10">
    <property type="entry name" value="Acetylglutamate kinase-like"/>
    <property type="match status" value="1"/>
</dbReference>
<dbReference type="HAMAP" id="MF_00082">
    <property type="entry name" value="ArgB"/>
    <property type="match status" value="1"/>
</dbReference>
<dbReference type="InterPro" id="IPR036393">
    <property type="entry name" value="AceGlu_kinase-like_sf"/>
</dbReference>
<dbReference type="InterPro" id="IPR004662">
    <property type="entry name" value="AcgluKinase_fam"/>
</dbReference>
<dbReference type="InterPro" id="IPR037528">
    <property type="entry name" value="ArgB"/>
</dbReference>
<dbReference type="InterPro" id="IPR001048">
    <property type="entry name" value="Asp/Glu/Uridylate_kinase"/>
</dbReference>
<dbReference type="NCBIfam" id="TIGR00761">
    <property type="entry name" value="argB"/>
    <property type="match status" value="1"/>
</dbReference>
<dbReference type="PANTHER" id="PTHR23342">
    <property type="entry name" value="N-ACETYLGLUTAMATE SYNTHASE"/>
    <property type="match status" value="1"/>
</dbReference>
<dbReference type="PANTHER" id="PTHR23342:SF0">
    <property type="entry name" value="N-ACETYLGLUTAMATE SYNTHASE, MITOCHONDRIAL"/>
    <property type="match status" value="1"/>
</dbReference>
<dbReference type="Pfam" id="PF00696">
    <property type="entry name" value="AA_kinase"/>
    <property type="match status" value="1"/>
</dbReference>
<dbReference type="PIRSF" id="PIRSF000728">
    <property type="entry name" value="NAGK"/>
    <property type="match status" value="1"/>
</dbReference>
<dbReference type="SUPFAM" id="SSF53633">
    <property type="entry name" value="Carbamate kinase-like"/>
    <property type="match status" value="1"/>
</dbReference>
<protein>
    <recommendedName>
        <fullName evidence="1">Acetylglutamate kinase</fullName>
        <ecNumber evidence="1">2.7.2.8</ecNumber>
    </recommendedName>
    <alternativeName>
        <fullName evidence="1">N-acetyl-L-glutamate 5-phosphotransferase</fullName>
    </alternativeName>
    <alternativeName>
        <fullName evidence="1">NAG kinase</fullName>
        <shortName evidence="1">NAGK</shortName>
    </alternativeName>
</protein>
<evidence type="ECO:0000255" key="1">
    <source>
        <dbReference type="HAMAP-Rule" id="MF_00082"/>
    </source>
</evidence>
<keyword id="KW-0028">Amino-acid biosynthesis</keyword>
<keyword id="KW-0055">Arginine biosynthesis</keyword>
<keyword id="KW-0067">ATP-binding</keyword>
<keyword id="KW-0963">Cytoplasm</keyword>
<keyword id="KW-0418">Kinase</keyword>
<keyword id="KW-0547">Nucleotide-binding</keyword>
<keyword id="KW-0808">Transferase</keyword>
<comment type="function">
    <text evidence="1">Catalyzes the ATP-dependent phosphorylation of N-acetyl-L-glutamate.</text>
</comment>
<comment type="catalytic activity">
    <reaction evidence="1">
        <text>N-acetyl-L-glutamate + ATP = N-acetyl-L-glutamyl 5-phosphate + ADP</text>
        <dbReference type="Rhea" id="RHEA:14629"/>
        <dbReference type="ChEBI" id="CHEBI:30616"/>
        <dbReference type="ChEBI" id="CHEBI:44337"/>
        <dbReference type="ChEBI" id="CHEBI:57936"/>
        <dbReference type="ChEBI" id="CHEBI:456216"/>
        <dbReference type="EC" id="2.7.2.8"/>
    </reaction>
</comment>
<comment type="pathway">
    <text evidence="1">Amino-acid biosynthesis; L-arginine biosynthesis; N(2)-acetyl-L-ornithine from L-glutamate: step 2/4.</text>
</comment>
<comment type="subcellular location">
    <subcellularLocation>
        <location evidence="1">Cytoplasm</location>
    </subcellularLocation>
</comment>
<comment type="similarity">
    <text evidence="1">Belongs to the acetylglutamate kinase family. ArgB subfamily.</text>
</comment>